<evidence type="ECO:0000250" key="1">
    <source>
        <dbReference type="UniProtKB" id="Q4U331"/>
    </source>
</evidence>
<evidence type="ECO:0000269" key="2">
    <source>
    </source>
</evidence>
<evidence type="ECO:0000269" key="3">
    <source>
    </source>
</evidence>
<evidence type="ECO:0000303" key="4">
    <source>
    </source>
</evidence>
<evidence type="ECO:0000303" key="5">
    <source>
    </source>
</evidence>
<evidence type="ECO:0000305" key="6"/>
<name>PY2CR_PSEPU</name>
<dbReference type="EC" id="1.5.1.21" evidence="2"/>
<dbReference type="EC" id="1.4.1.17" evidence="2 3"/>
<dbReference type="EMBL" id="AB190215">
    <property type="protein sequence ID" value="BAD89743.1"/>
    <property type="molecule type" value="Genomic_DNA"/>
</dbReference>
<dbReference type="SMR" id="Q5FB93"/>
<dbReference type="KEGG" id="ag:BAD89743"/>
<dbReference type="BRENDA" id="1.5.1.21">
    <property type="organism ID" value="5092"/>
</dbReference>
<dbReference type="GO" id="GO:0047125">
    <property type="term" value="F:delta1-piperideine-2-carboxylate reductase activity"/>
    <property type="evidence" value="ECO:0007669"/>
    <property type="project" value="UniProtKB-EC"/>
</dbReference>
<dbReference type="GO" id="GO:0050132">
    <property type="term" value="F:N-methylalanine dehydrogenase activity"/>
    <property type="evidence" value="ECO:0007669"/>
    <property type="project" value="UniProtKB-EC"/>
</dbReference>
<dbReference type="FunFam" id="3.30.1370.60:FF:000002">
    <property type="entry name" value="Malate/L-lactate family dehydrogenase"/>
    <property type="match status" value="1"/>
</dbReference>
<dbReference type="Gene3D" id="1.10.1530.10">
    <property type="match status" value="1"/>
</dbReference>
<dbReference type="Gene3D" id="3.30.1370.60">
    <property type="entry name" value="Hypothetical oxidoreductase yiak, domain 2"/>
    <property type="match status" value="1"/>
</dbReference>
<dbReference type="InterPro" id="IPR043144">
    <property type="entry name" value="Mal/L-sulf/L-lact_DH-like_ah"/>
</dbReference>
<dbReference type="InterPro" id="IPR043143">
    <property type="entry name" value="Mal/L-sulf/L-lact_DH-like_NADP"/>
</dbReference>
<dbReference type="InterPro" id="IPR036111">
    <property type="entry name" value="Mal/L-sulfo/L-lacto_DH-like_sf"/>
</dbReference>
<dbReference type="InterPro" id="IPR003767">
    <property type="entry name" value="Malate/L-lactate_DH-like"/>
</dbReference>
<dbReference type="PANTHER" id="PTHR11091:SF0">
    <property type="entry name" value="MALATE DEHYDROGENASE"/>
    <property type="match status" value="1"/>
</dbReference>
<dbReference type="PANTHER" id="PTHR11091">
    <property type="entry name" value="OXIDOREDUCTASE-RELATED"/>
    <property type="match status" value="1"/>
</dbReference>
<dbReference type="Pfam" id="PF02615">
    <property type="entry name" value="Ldh_2"/>
    <property type="match status" value="1"/>
</dbReference>
<dbReference type="SUPFAM" id="SSF89733">
    <property type="entry name" value="L-sulfolactate dehydrogenase-like"/>
    <property type="match status" value="1"/>
</dbReference>
<feature type="initiator methionine" description="Removed" evidence="3">
    <location>
        <position position="1"/>
    </location>
</feature>
<feature type="chain" id="PRO_0000432290" description="Delta(1)-pyrroline-2-carboxylate/Delta(1)-piperideine-2-carboxylate reductase">
    <location>
        <begin position="2"/>
        <end position="341"/>
    </location>
</feature>
<feature type="active site" description="Charge relay system" evidence="1">
    <location>
        <position position="52"/>
    </location>
</feature>
<feature type="active site" description="Proton donor" evidence="1">
    <location>
        <position position="53"/>
    </location>
</feature>
<feature type="active site" description="Charge relay system" evidence="1">
    <location>
        <position position="193"/>
    </location>
</feature>
<feature type="binding site" evidence="1">
    <location>
        <position position="57"/>
    </location>
    <ligand>
        <name>substrate</name>
    </ligand>
</feature>
<feature type="binding site" description="in other chain" evidence="1">
    <location>
        <begin position="125"/>
        <end position="129"/>
    </location>
    <ligand>
        <name>NADP(+)</name>
        <dbReference type="ChEBI" id="CHEBI:58349"/>
        <note>ligand shared between dimeric partners</note>
    </ligand>
</feature>
<feature type="binding site" evidence="1">
    <location>
        <position position="165"/>
    </location>
    <ligand>
        <name>substrate</name>
    </ligand>
</feature>
<feature type="binding site" description="in other chain" evidence="1">
    <location>
        <begin position="183"/>
        <end position="185"/>
    </location>
    <ligand>
        <name>NADP(+)</name>
        <dbReference type="ChEBI" id="CHEBI:58349"/>
        <note>ligand shared between dimeric partners</note>
    </ligand>
</feature>
<feature type="binding site" evidence="1">
    <location>
        <begin position="191"/>
        <end position="192"/>
    </location>
    <ligand>
        <name>substrate</name>
    </ligand>
</feature>
<feature type="binding site" evidence="1">
    <location>
        <begin position="235"/>
        <end position="236"/>
    </location>
    <ligand>
        <name>NADP(+)</name>
        <dbReference type="ChEBI" id="CHEBI:58349"/>
        <note>ligand shared between dimeric partners</note>
    </ligand>
</feature>
<feature type="binding site" description="in other chain" evidence="1">
    <location>
        <begin position="308"/>
        <end position="314"/>
    </location>
    <ligand>
        <name>NADP(+)</name>
        <dbReference type="ChEBI" id="CHEBI:58349"/>
        <note>ligand shared between dimeric partners</note>
    </ligand>
</feature>
<proteinExistence type="evidence at protein level"/>
<reference key="1">
    <citation type="journal article" date="2005" name="FEBS J.">
        <title>N-methyl-L-amino acid dehydrogenase from Pseudomonas putida. A novel member of an unusual NAD(P)-dependent oxidoreductase superfamily.</title>
        <authorList>
            <person name="Mihara H."/>
            <person name="Muramatsu H."/>
            <person name="Kakutani R."/>
            <person name="Yasuda M."/>
            <person name="Ueda M."/>
            <person name="Kurihara T."/>
            <person name="Esaki N."/>
        </authorList>
    </citation>
    <scope>NUCLEOTIDE SEQUENCE [GENOMIC DNA]</scope>
    <scope>PROTEIN SEQUENCE OF N-TERMINUS</scope>
    <scope>CLEAVAGE OF INITIATOR METHIONINE</scope>
    <scope>FUNCTION</scope>
    <scope>CATALYTIC ACTIVITY</scope>
    <scope>SUBSTRATE SPECIFICITY</scope>
    <scope>SUBUNIT</scope>
    <source>
        <strain>ATCC 12633 / DSM 291 / JCM 13063 / CCUG 12690 / LMG 2257 / NBRC 14164 / NCIMB 9494 / NCTC 10936 / VKM B-2187 / Stanier 90</strain>
    </source>
</reference>
<reference key="2">
    <citation type="journal article" date="2005" name="J. Biol. Chem.">
        <title>The putative malate/lactate dehydrogenase from Pseudomonas putida is an NADPH-dependent delta1-piperideine-2-carboxylate/delta1-pyrroline-2-carboxylate reductase involved in the catabolism of D-lysine and D-proline.</title>
        <authorList>
            <person name="Muramatsu H."/>
            <person name="Mihara H."/>
            <person name="Kakutani R."/>
            <person name="Yasuda M."/>
            <person name="Ueda M."/>
            <person name="Kurihara T."/>
            <person name="Esaki N."/>
        </authorList>
    </citation>
    <scope>FUNCTION</scope>
    <scope>CATALYTIC ACTIVITY</scope>
    <scope>SUBSTRATE SPECIFICITY</scope>
    <scope>BIOPHYSICOCHEMICAL PROPERTIES</scope>
    <scope>ACTIVITY REGULATION</scope>
    <scope>DISRUPTION PHENOTYPE</scope>
    <scope>KINETIC MECHANISM</scope>
    <source>
        <strain>ATCC 12633 / DSM 291 / JCM 13063 / CCUG 12690 / LMG 2257 / NBRC 14164 / NCIMB 9494 / NCTC 10936 / VKM B-2187 / Stanier 90</strain>
    </source>
</reference>
<organism>
    <name type="scientific">Pseudomonas putida</name>
    <name type="common">Arthrobacter siderocapsulatus</name>
    <dbReference type="NCBI Taxonomy" id="303"/>
    <lineage>
        <taxon>Bacteria</taxon>
        <taxon>Pseudomonadati</taxon>
        <taxon>Pseudomonadota</taxon>
        <taxon>Gammaproteobacteria</taxon>
        <taxon>Pseudomonadales</taxon>
        <taxon>Pseudomonadaceae</taxon>
        <taxon>Pseudomonas</taxon>
    </lineage>
</organism>
<keyword id="KW-0903">Direct protein sequencing</keyword>
<keyword id="KW-0521">NADP</keyword>
<keyword id="KW-0560">Oxidoreductase</keyword>
<protein>
    <recommendedName>
        <fullName evidence="4">Delta(1)-pyrroline-2-carboxylate/Delta(1)-piperideine-2-carboxylate reductase</fullName>
        <shortName evidence="4">Pyr2C/Pip2C reductase</shortName>
        <ecNumber evidence="2">1.5.1.21</ecNumber>
    </recommendedName>
    <alternativeName>
        <fullName evidence="5">N-methyl-L-amino acid dehydrogenase</fullName>
        <shortName evidence="5">NMAADH</shortName>
        <ecNumber evidence="2 3">1.4.1.17</ecNumber>
    </alternativeName>
</protein>
<accession>Q5FB93</accession>
<comment type="function">
    <text evidence="2">Catalyzes the reduction of both Delta(1)-pyrroline-2-carboxylate (Pyr2C) and Delta(1)-piperideine-2-carboxylate (Pip2C) to L-proline and L-pipecolate, respectively, using NADPH as the electron donor. Can use NADH instead of NADPH, although with much less efficiency. Plays an essential role in the catabolism of D-proline and D-lysine, which allows P.putida to grow on each of these amino-acids as a sole carbon source; D-lysine appears to be catabolized only through the pipecolate pathway. Can also catalyze the reverse oxidation reactions, albeit at a much lower rate. To a lesser extent, is able to catalyze in vitro the NADPH-dependent formation of N-alkyl-L-amino acids from the corresponding alpha-oxo acids and alkylamines, e.g. the formation of N-methylalanine from pyruvate and N-methylamine; cannot use ammonia as substrate for these reductive amination reactions. Shows neither malate dehydrogenase nor lactate dehydrogenase activity.</text>
</comment>
<comment type="catalytic activity">
    <reaction evidence="2">
        <text>L-pipecolate + NADP(+) = Delta(1)-piperideine-2-carboxylate + NADPH + H(+)</text>
        <dbReference type="Rhea" id="RHEA:12524"/>
        <dbReference type="ChEBI" id="CHEBI:15378"/>
        <dbReference type="ChEBI" id="CHEBI:57783"/>
        <dbReference type="ChEBI" id="CHEBI:58349"/>
        <dbReference type="ChEBI" id="CHEBI:61185"/>
        <dbReference type="ChEBI" id="CHEBI:77631"/>
        <dbReference type="EC" id="1.5.1.21"/>
    </reaction>
</comment>
<comment type="catalytic activity">
    <reaction evidence="2">
        <text>L-proline + NADP(+) = 1-pyrroline-2-carboxylate + NADPH + H(+)</text>
        <dbReference type="Rhea" id="RHEA:20317"/>
        <dbReference type="ChEBI" id="CHEBI:15378"/>
        <dbReference type="ChEBI" id="CHEBI:39785"/>
        <dbReference type="ChEBI" id="CHEBI:57783"/>
        <dbReference type="ChEBI" id="CHEBI:58349"/>
        <dbReference type="ChEBI" id="CHEBI:60039"/>
        <dbReference type="EC" id="1.5.1.21"/>
    </reaction>
</comment>
<comment type="catalytic activity">
    <reaction evidence="2 3">
        <text>N-methyl-L-alanine + NADP(+) + H2O = methylamine + pyruvate + NADPH + H(+)</text>
        <dbReference type="Rhea" id="RHEA:21768"/>
        <dbReference type="ChEBI" id="CHEBI:15361"/>
        <dbReference type="ChEBI" id="CHEBI:15377"/>
        <dbReference type="ChEBI" id="CHEBI:15378"/>
        <dbReference type="ChEBI" id="CHEBI:57783"/>
        <dbReference type="ChEBI" id="CHEBI:58175"/>
        <dbReference type="ChEBI" id="CHEBI:58349"/>
        <dbReference type="ChEBI" id="CHEBI:59338"/>
        <dbReference type="EC" id="1.4.1.17"/>
    </reaction>
</comment>
<comment type="activity regulation">
    <text evidence="2">Is inhibited by the substrate analog pyrrole-2-carboxylate, but not by N-formylphenylalanine.</text>
</comment>
<comment type="biophysicochemical properties">
    <kinetics>
        <KM evidence="2">43 uM for Delta(1)-pyrroline-2-carboxylate</KM>
        <KM evidence="2">15 uM for Delta(1)-piperideine-2-carboxylate</KM>
        <KM evidence="2">144 mM for L-proline</KM>
        <KM evidence="2">32.4 mM for L-pipecolate</KM>
        <KM evidence="2">34 uM for NADPH (with Pyr2C as cosubstrate)</KM>
        <KM evidence="2">140 uM for NADPH (with Pip2C as cosubstrate)</KM>
        <KM evidence="2">211 uM for NADP(+) (with L-proline as cosubstrate)</KM>
        <KM evidence="2">112 uM for NADP(+) (with L-pipecolate as cosubstrate)</KM>
        <Vmax evidence="2">168.0 umol/min/mg enzyme for Pyr2C reduction</Vmax>
        <Vmax evidence="2">220.0 umol/min/mg enzyme for Pip2C reduction</Vmax>
        <Vmax evidence="2">0.271 umol/min/mg enzyme for L-proline oxidation</Vmax>
        <Vmax evidence="2">0.118 umol/min/mg enzyme for L-pipecolate oxidation</Vmax>
    </kinetics>
    <phDependence>
        <text evidence="2">Optimum pH is 7.0 for Pyr2C reduction, 8.0 for Pip2C reduction, and 10.0 for L-proline and L-pipecolate oxidation.</text>
    </phDependence>
    <temperatureDependence>
        <text evidence="2">Optimum temperature is 35 degrees Celsius. Is inactivated at a rate of about a 30% decrease in 30 minutes at 35 degrees Celsius. The enzyme keeps its full activity, however, at 30 degrees Celsius for at least 30 minutes.</text>
    </temperatureDependence>
</comment>
<comment type="subunit">
    <text evidence="3">Homodimer.</text>
</comment>
<comment type="disruption phenotype">
    <text evidence="2">Cells lacking this gene loss their ability to grow on D-lysine and also on D-proline as a sole carbon source. Moreover, the mutant strain grows only slowly in the medium containing L-lysine as a sole carbon source in contrast to the wild-type strain. No difference is evident between the two strains in other media containing as a sole carbon source L-pipecolate, L-proline, and the following D-amino acids: D-alanine, D-valine, D-leucine, D-isoleucine, D-serine, D-threonine, D-aspartate, D-glutamate, D-glutamine, D-arginine, and D-phenylalanine.</text>
</comment>
<comment type="miscellaneous">
    <text evidence="2">The enzyme reaction proceeds through an ordered Bi-Bi mechanism.</text>
</comment>
<comment type="similarity">
    <text evidence="6">Belongs to the LDH2/MDH2 oxidoreductase family.</text>
</comment>
<gene>
    <name evidence="4" type="primary">dpkA</name>
</gene>
<sequence>MSAPSTSTVVRVPFTELQSLLQAIFQRHGCSEAVARVLAHNCASAQRDGAHSHGVFRMPGYVSTLASGWVDGQATPQVSDVAAGYVRVDAAGGFAQPALAAARELLVAKARSAGIAVLAIHNSHHFAALWPDVEPFAEEGLVALSVVNSMTCVVPHGARKPLFGTNPIAFAAPCAEHDPIVFDMATSAMAHGDVQIAARAGQQLPEGMGVDADGQPTTDPKAILEGGALLPFGGHKGSALSMMVELLAAALTGGHFSWEFDWSGHPGAKTPWTGQLIIVINPGKAEGERFAQRSRELVEHMQAVGLTRMPGERRYREREVAEEEGVAVTEQELQGLKELLG</sequence>